<sequence>MVSLRDNIESQPLSHNRRVRKNFGHINLVADIPNLIEIQKNSYERNFLQLNIKDSERKNKGLQSILNSIFPISDSSNIANLEFVKYEFDTPKYDVDECSQRSLSYAAPLKVTLRLSIWDIDEDTGTREIKGIKEQEVYMGDIPLMTKNGTFIINGTERVVVSQMHRSPGVFFYHDEGKVHSSGKLLYSARVIPYRGSWLDFEFDAKDVIYFRIDRKRKLYATTLLRAIGMNTEEIMKFYYNSVTYKCIKNKGWSVKFIPQHITAHRLTSDLVDADTGNVLLKAGQKITPRLAQKYFSIGLNNILVTHETLIGKYLSEDLRDPESDEILAKIGEMITADMLQVINDLKIKNVNVLVINPQSGPYIRNTLFADKNQDRETALCDIFRVLRPGEPANIEAAESLFYNLFFDAERYDLSEVGRIKMNSRLELNISEEITVLTIDDIKNIVRILVELKDGKGIIDDIDHLGNRRVRSVGELIENQFRIGLVRIEKSVIERMSAGDVDTVMPHDLVNSKILVSVVKEFFSTSQLSQFMDQTNPLSEITHKRRLSALGPGGLSRDRAGFEVRDVHPTHYGRICPIETPEGQNIGLINSMATYARINKHGFIESPYRRVKDGYVTDEVVYLSAIEEGKYKIGQANSKVDQDGKLQGEFINCRVEGGNFVMVEPYEVDFIDVTPMQVVSVAASLIPFLENDDANRALMGSNMQRQAVPLIKTEAPFVGTGVEGVVAKDSGASVLALHDGIVERVDSNRIVIRTLEQKVDGSPSVDIYNLLKFQKSNHNTCINQKPLVKVGHYVKKNDIIADGPSTDNGEIALGRNVLVAFLPWNGYNFEDSILISERIVKEDVFTSIHIEEFEVIARDTRLGPEEITRDIPNVSEEALRHLDEVGIIYVGAEVKAGDILVGKVTPKSESPITPEEKLLRAIFGEKAFDVKDSSLHVPSGVSGTVVEVRIFSRRGVEKDQRAIAIEKQQIEKLAKDRDDELEIIEHFVFSWLEKLLVGHVIISGPKQITAGQTITTEMLKGLSKGQLWQLIVEDANVMNEIEQIKIHYDEKKHALDKRFATKVEKLQSGDDLPQGALKVVKVFIATKHKLQPGDKMAGRHGNKGVISRIVPEEDMPFLEDGTVVDIVLNPLGLPSRMNIGQILETHLGWASINLAKKISTLVKEYKDNNIDIEQIKKFLLELYGKDINYILEGSEEGIISFCNKVSKGVYFATPVFDGAKVQDVKDMLKLADQDLSGQVKLIDGRTGEYFDRLVTVGHKYLLKLHHLVDNKIHSRSIGPYSLVTQQPLGGKSHFGGQRFGEMECWALQAYGAAYTLQEMLTVKSDDVNGRIKTYDSIVRGENNFESGIPESFNVMIKEFRSLCLNVKLEVTASK</sequence>
<proteinExistence type="inferred from homology"/>
<protein>
    <recommendedName>
        <fullName evidence="1">DNA-directed RNA polymerase subunit beta</fullName>
        <shortName evidence="1">RNAP subunit beta</shortName>
        <ecNumber evidence="1">2.7.7.6</ecNumber>
    </recommendedName>
    <alternativeName>
        <fullName evidence="1">RNA polymerase subunit beta</fullName>
    </alternativeName>
    <alternativeName>
        <fullName evidence="1">Transcriptase subunit beta</fullName>
    </alternativeName>
</protein>
<evidence type="ECO:0000255" key="1">
    <source>
        <dbReference type="HAMAP-Rule" id="MF_01321"/>
    </source>
</evidence>
<evidence type="ECO:0000305" key="2"/>
<dbReference type="EC" id="2.7.7.6" evidence="1"/>
<dbReference type="EMBL" id="AH005716">
    <property type="protein sequence ID" value="AAB88811.1"/>
    <property type="status" value="ALT_SEQ"/>
    <property type="molecule type" value="Genomic_DNA"/>
</dbReference>
<dbReference type="EMBL" id="AH005716">
    <property type="protein sequence ID" value="AAB88812.1"/>
    <property type="status" value="ALT_SEQ"/>
    <property type="molecule type" value="Genomic_DNA"/>
</dbReference>
<dbReference type="EMBL" id="AE017197">
    <property type="protein sequence ID" value="AAU03614.1"/>
    <property type="molecule type" value="Genomic_DNA"/>
</dbReference>
<dbReference type="EMBL" id="AF083622">
    <property type="protein sequence ID" value="AAD52032.1"/>
    <property type="status" value="ALT_SEQ"/>
    <property type="molecule type" value="Genomic_DNA"/>
</dbReference>
<dbReference type="RefSeq" id="WP_011190601.1">
    <property type="nucleotide sequence ID" value="NC_006142.1"/>
</dbReference>
<dbReference type="SMR" id="P77941"/>
<dbReference type="KEGG" id="rty:RT0129"/>
<dbReference type="eggNOG" id="COG0085">
    <property type="taxonomic scope" value="Bacteria"/>
</dbReference>
<dbReference type="HOGENOM" id="CLU_000524_4_0_5"/>
<dbReference type="OrthoDB" id="9803954at2"/>
<dbReference type="Proteomes" id="UP000000604">
    <property type="component" value="Chromosome"/>
</dbReference>
<dbReference type="GO" id="GO:0000428">
    <property type="term" value="C:DNA-directed RNA polymerase complex"/>
    <property type="evidence" value="ECO:0007669"/>
    <property type="project" value="UniProtKB-KW"/>
</dbReference>
<dbReference type="GO" id="GO:0003677">
    <property type="term" value="F:DNA binding"/>
    <property type="evidence" value="ECO:0007669"/>
    <property type="project" value="UniProtKB-UniRule"/>
</dbReference>
<dbReference type="GO" id="GO:0003899">
    <property type="term" value="F:DNA-directed RNA polymerase activity"/>
    <property type="evidence" value="ECO:0007669"/>
    <property type="project" value="UniProtKB-UniRule"/>
</dbReference>
<dbReference type="GO" id="GO:0032549">
    <property type="term" value="F:ribonucleoside binding"/>
    <property type="evidence" value="ECO:0007669"/>
    <property type="project" value="InterPro"/>
</dbReference>
<dbReference type="GO" id="GO:0006351">
    <property type="term" value="P:DNA-templated transcription"/>
    <property type="evidence" value="ECO:0007669"/>
    <property type="project" value="UniProtKB-UniRule"/>
</dbReference>
<dbReference type="CDD" id="cd00653">
    <property type="entry name" value="RNA_pol_B_RPB2"/>
    <property type="match status" value="1"/>
</dbReference>
<dbReference type="Gene3D" id="2.40.50.100">
    <property type="match status" value="1"/>
</dbReference>
<dbReference type="Gene3D" id="2.40.50.150">
    <property type="match status" value="1"/>
</dbReference>
<dbReference type="Gene3D" id="3.90.1100.10">
    <property type="match status" value="2"/>
</dbReference>
<dbReference type="Gene3D" id="2.30.150.10">
    <property type="entry name" value="DNA-directed RNA polymerase, beta subunit, external 1 domain"/>
    <property type="match status" value="1"/>
</dbReference>
<dbReference type="Gene3D" id="2.40.270.10">
    <property type="entry name" value="DNA-directed RNA polymerase, subunit 2, domain 6"/>
    <property type="match status" value="1"/>
</dbReference>
<dbReference type="Gene3D" id="3.90.1800.10">
    <property type="entry name" value="RNA polymerase alpha subunit dimerisation domain"/>
    <property type="match status" value="1"/>
</dbReference>
<dbReference type="Gene3D" id="3.90.1110.10">
    <property type="entry name" value="RNA polymerase Rpb2, domain 2"/>
    <property type="match status" value="1"/>
</dbReference>
<dbReference type="HAMAP" id="MF_01321">
    <property type="entry name" value="RNApol_bact_RpoB"/>
    <property type="match status" value="1"/>
</dbReference>
<dbReference type="InterPro" id="IPR042107">
    <property type="entry name" value="DNA-dir_RNA_pol_bsu_ext_1_sf"/>
</dbReference>
<dbReference type="InterPro" id="IPR019462">
    <property type="entry name" value="DNA-dir_RNA_pol_bsu_external_1"/>
</dbReference>
<dbReference type="InterPro" id="IPR015712">
    <property type="entry name" value="DNA-dir_RNA_pol_su2"/>
</dbReference>
<dbReference type="InterPro" id="IPR007120">
    <property type="entry name" value="DNA-dir_RNAP_su2_dom"/>
</dbReference>
<dbReference type="InterPro" id="IPR037033">
    <property type="entry name" value="DNA-dir_RNAP_su2_hyb_sf"/>
</dbReference>
<dbReference type="InterPro" id="IPR010243">
    <property type="entry name" value="RNA_pol_bsu_bac"/>
</dbReference>
<dbReference type="InterPro" id="IPR007121">
    <property type="entry name" value="RNA_pol_bsu_CS"/>
</dbReference>
<dbReference type="InterPro" id="IPR007644">
    <property type="entry name" value="RNA_pol_bsu_protrusion"/>
</dbReference>
<dbReference type="InterPro" id="IPR007642">
    <property type="entry name" value="RNA_pol_Rpb2_2"/>
</dbReference>
<dbReference type="InterPro" id="IPR037034">
    <property type="entry name" value="RNA_pol_Rpb2_2_sf"/>
</dbReference>
<dbReference type="InterPro" id="IPR007645">
    <property type="entry name" value="RNA_pol_Rpb2_3"/>
</dbReference>
<dbReference type="InterPro" id="IPR007641">
    <property type="entry name" value="RNA_pol_Rpb2_7"/>
</dbReference>
<dbReference type="InterPro" id="IPR014724">
    <property type="entry name" value="RNA_pol_RPB2_OB-fold"/>
</dbReference>
<dbReference type="NCBIfam" id="NF001616">
    <property type="entry name" value="PRK00405.1"/>
    <property type="match status" value="1"/>
</dbReference>
<dbReference type="NCBIfam" id="TIGR02013">
    <property type="entry name" value="rpoB"/>
    <property type="match status" value="1"/>
</dbReference>
<dbReference type="PANTHER" id="PTHR20856">
    <property type="entry name" value="DNA-DIRECTED RNA POLYMERASE I SUBUNIT 2"/>
    <property type="match status" value="1"/>
</dbReference>
<dbReference type="Pfam" id="PF04563">
    <property type="entry name" value="RNA_pol_Rpb2_1"/>
    <property type="match status" value="1"/>
</dbReference>
<dbReference type="Pfam" id="PF04561">
    <property type="entry name" value="RNA_pol_Rpb2_2"/>
    <property type="match status" value="2"/>
</dbReference>
<dbReference type="Pfam" id="PF04565">
    <property type="entry name" value="RNA_pol_Rpb2_3"/>
    <property type="match status" value="1"/>
</dbReference>
<dbReference type="Pfam" id="PF10385">
    <property type="entry name" value="RNA_pol_Rpb2_45"/>
    <property type="match status" value="1"/>
</dbReference>
<dbReference type="Pfam" id="PF00562">
    <property type="entry name" value="RNA_pol_Rpb2_6"/>
    <property type="match status" value="1"/>
</dbReference>
<dbReference type="Pfam" id="PF04560">
    <property type="entry name" value="RNA_pol_Rpb2_7"/>
    <property type="match status" value="1"/>
</dbReference>
<dbReference type="SUPFAM" id="SSF64484">
    <property type="entry name" value="beta and beta-prime subunits of DNA dependent RNA-polymerase"/>
    <property type="match status" value="1"/>
</dbReference>
<dbReference type="PROSITE" id="PS01166">
    <property type="entry name" value="RNA_POL_BETA"/>
    <property type="match status" value="1"/>
</dbReference>
<organism>
    <name type="scientific">Rickettsia typhi (strain ATCC VR-144 / Wilmington)</name>
    <dbReference type="NCBI Taxonomy" id="257363"/>
    <lineage>
        <taxon>Bacteria</taxon>
        <taxon>Pseudomonadati</taxon>
        <taxon>Pseudomonadota</taxon>
        <taxon>Alphaproteobacteria</taxon>
        <taxon>Rickettsiales</taxon>
        <taxon>Rickettsiaceae</taxon>
        <taxon>Rickettsieae</taxon>
        <taxon>Rickettsia</taxon>
        <taxon>typhus group</taxon>
    </lineage>
</organism>
<keyword id="KW-0240">DNA-directed RNA polymerase</keyword>
<keyword id="KW-0548">Nucleotidyltransferase</keyword>
<keyword id="KW-0804">Transcription</keyword>
<keyword id="KW-0808">Transferase</keyword>
<reference key="1">
    <citation type="journal article" date="1998" name="Antimicrob. Agents Chemother.">
        <title>Detection of point mutations in rpoB gene of rifampin-resistant Rickettsia typhi.</title>
        <authorList>
            <person name="Troyer J.M."/>
            <person name="Radulovic S."/>
            <person name="Andersson S.G.E."/>
            <person name="Azad A.F."/>
        </authorList>
    </citation>
    <scope>NUCLEOTIDE SEQUENCE [GENOMIC DNA]</scope>
</reference>
<reference key="2">
    <citation type="journal article" date="2004" name="J. Bacteriol.">
        <title>Complete genome sequence of Rickettsia typhi and comparison with sequences of other Rickettsiae.</title>
        <authorList>
            <person name="McLeod M.P."/>
            <person name="Qin X."/>
            <person name="Karpathy S.E."/>
            <person name="Gioia J."/>
            <person name="Highlander S.K."/>
            <person name="Fox G.E."/>
            <person name="McNeill T.Z."/>
            <person name="Jiang H."/>
            <person name="Muzny D."/>
            <person name="Jacob L.S."/>
            <person name="Hawes A.C."/>
            <person name="Sodergren E."/>
            <person name="Gill R."/>
            <person name="Hume J."/>
            <person name="Morgan M."/>
            <person name="Fan G."/>
            <person name="Amin A.G."/>
            <person name="Gibbs R.A."/>
            <person name="Hong C."/>
            <person name="Yu X.-J."/>
            <person name="Walker D.H."/>
            <person name="Weinstock G.M."/>
        </authorList>
    </citation>
    <scope>NUCLEOTIDE SEQUENCE [LARGE SCALE GENOMIC DNA]</scope>
    <source>
        <strain>ATCC VR-144 / Wilmington</strain>
    </source>
</reference>
<reference key="3">
    <citation type="journal article" date="1999" name="Antimicrob. Agents Chemother.">
        <title>Characterization of mutations in the rpoB gene in naturally rifampin-resistant Rickettsia species.</title>
        <authorList>
            <person name="Drancourt M."/>
            <person name="Raoult D."/>
        </authorList>
    </citation>
    <scope>NUCLEOTIDE SEQUENCE [GENOMIC DNA] OF 1-1368</scope>
    <source>
        <strain>ATCC VR-144 / Wilmington</strain>
    </source>
</reference>
<gene>
    <name evidence="1" type="primary">rpoB</name>
    <name type="ordered locus">RT0129</name>
</gene>
<feature type="chain" id="PRO_0000047951" description="DNA-directed RNA polymerase subunit beta">
    <location>
        <begin position="1"/>
        <end position="1374"/>
    </location>
</feature>
<feature type="sequence conflict" description="In Ref. 2 and 3." evidence="2" ref="2 3">
    <original>F</original>
    <variation>L</variation>
    <location>
        <position position="201"/>
    </location>
</feature>
<feature type="sequence conflict" description="In Ref. 2 and 3." evidence="2" ref="2 3">
    <original>V</original>
    <variation>I</variation>
    <location>
        <position position="272"/>
    </location>
</feature>
<feature type="sequence conflict" description="In Ref. 2 and 3." evidence="2" ref="2 3">
    <original>T</original>
    <variation>A</variation>
    <location>
        <position position="378"/>
    </location>
</feature>
<feature type="sequence conflict" description="In Ref. 2 and 3." evidence="2" ref="2 3">
    <original>H</original>
    <variation>P</variation>
    <location>
        <position position="1265"/>
    </location>
</feature>
<feature type="sequence conflict" description="In Ref. 2 and 3." evidence="2" ref="2 3">
    <original>G</original>
    <variation>S</variation>
    <location>
        <position position="1290"/>
    </location>
</feature>
<comment type="function">
    <text>DNA-dependent RNA polymerase catalyzes the transcription of DNA into RNA using the four ribonucleoside triphosphates as substrates.</text>
</comment>
<comment type="catalytic activity">
    <reaction evidence="1">
        <text>RNA(n) + a ribonucleoside 5'-triphosphate = RNA(n+1) + diphosphate</text>
        <dbReference type="Rhea" id="RHEA:21248"/>
        <dbReference type="Rhea" id="RHEA-COMP:14527"/>
        <dbReference type="Rhea" id="RHEA-COMP:17342"/>
        <dbReference type="ChEBI" id="CHEBI:33019"/>
        <dbReference type="ChEBI" id="CHEBI:61557"/>
        <dbReference type="ChEBI" id="CHEBI:140395"/>
        <dbReference type="EC" id="2.7.7.6"/>
    </reaction>
</comment>
<comment type="subunit">
    <text evidence="1">The RNAP catalytic core consists of 2 alpha, 1 beta, 1 beta' and 1 omega subunit. When a sigma factor is associated with the core the holoenzyme is formed, which can initiate transcription.</text>
</comment>
<comment type="similarity">
    <text evidence="1">Belongs to the RNA polymerase beta chain family.</text>
</comment>
<comment type="sequence caution" evidence="2">
    <conflict type="miscellaneous discrepancy">
        <sequence resource="EMBL-CDS" id="AAB88811"/>
    </conflict>
    <text>Sequence differs from that shown in the region 864-1035.</text>
</comment>
<comment type="sequence caution" evidence="2">
    <conflict type="miscellaneous discrepancy">
        <sequence resource="EMBL-CDS" id="AAB88812"/>
    </conflict>
    <text>Sequence differs from that shown in the region 864-1035.</text>
</comment>
<comment type="sequence caution" evidence="2">
    <conflict type="miscellaneous discrepancy">
        <sequence resource="EMBL-CDS" id="AAD52032"/>
    </conflict>
    <text>Sequence differs from that shown in the region 864-1035.</text>
</comment>
<name>RPOB_RICTY</name>
<accession>P77941</accession>
<accession>Q68XM8</accession>